<reference key="1">
    <citation type="journal article" date="2015" name="PLoS Pathog.">
        <title>An oomycete CRN effector reprograms expression of plant HSP genes by targeting their promoters.</title>
        <authorList>
            <person name="Song T."/>
            <person name="Ma Z."/>
            <person name="Shen D."/>
            <person name="Li Q."/>
            <person name="Li W."/>
            <person name="Su L."/>
            <person name="Ye T."/>
            <person name="Zhang M."/>
            <person name="Wang Y."/>
            <person name="Dou D."/>
        </authorList>
    </citation>
    <scope>NUCLEOTIDE SEQUENCE [MRNA]</scope>
    <scope>DOMAIN</scope>
    <scope>INDUCTION</scope>
    <scope>FUNCTION</scope>
    <scope>SUBCELLULAR LOCATION</scope>
    <scope>MUTAGENESIS OF 120-LYS--ARG-123; LEU-766; GLY-768 AND VAL-769</scope>
    <source>
        <strain>P6497</strain>
    </source>
</reference>
<dbReference type="EMBL" id="KT726855">
    <property type="protein sequence ID" value="ALD51957.1"/>
    <property type="molecule type" value="mRNA"/>
</dbReference>
<dbReference type="GlyCosmos" id="A0A0M5K865">
    <property type="glycosylation" value="3 sites, No reported glycans"/>
</dbReference>
<dbReference type="VEuPathDB" id="FungiDB:PHYSODRAFT_348355"/>
<dbReference type="PHI-base" id="PHI:5392"/>
<dbReference type="GO" id="GO:0005576">
    <property type="term" value="C:extracellular region"/>
    <property type="evidence" value="ECO:0007669"/>
    <property type="project" value="UniProtKB-SubCell"/>
</dbReference>
<dbReference type="GO" id="GO:0042025">
    <property type="term" value="C:host cell nucleus"/>
    <property type="evidence" value="ECO:0007669"/>
    <property type="project" value="UniProtKB-SubCell"/>
</dbReference>
<dbReference type="GO" id="GO:0003677">
    <property type="term" value="F:DNA binding"/>
    <property type="evidence" value="ECO:0007669"/>
    <property type="project" value="UniProtKB-KW"/>
</dbReference>
<dbReference type="Gene3D" id="1.10.150.320">
    <property type="entry name" value="Photosystem II 12 kDa extrinsic protein"/>
    <property type="match status" value="1"/>
</dbReference>
<dbReference type="InterPro" id="IPR045379">
    <property type="entry name" value="Crinkler_N"/>
</dbReference>
<dbReference type="InterPro" id="IPR010994">
    <property type="entry name" value="RuvA_2-like"/>
</dbReference>
<dbReference type="Pfam" id="PF20147">
    <property type="entry name" value="Crinkler"/>
    <property type="match status" value="1"/>
</dbReference>
<dbReference type="Pfam" id="PF12836">
    <property type="entry name" value="HHH_3"/>
    <property type="match status" value="1"/>
</dbReference>
<dbReference type="SUPFAM" id="SSF47781">
    <property type="entry name" value="RuvA domain 2-like"/>
    <property type="match status" value="1"/>
</dbReference>
<keyword id="KW-0238">DNA-binding</keyword>
<keyword id="KW-0325">Glycoprotein</keyword>
<keyword id="KW-1048">Host nucleus</keyword>
<keyword id="KW-0964">Secreted</keyword>
<keyword id="KW-0732">Signal</keyword>
<keyword id="KW-0843">Virulence</keyword>
<accession>A0A0M5K865</accession>
<evidence type="ECO:0000255" key="1"/>
<evidence type="ECO:0000255" key="2">
    <source>
        <dbReference type="PROSITE-ProRule" id="PRU00498"/>
    </source>
</evidence>
<evidence type="ECO:0000269" key="3">
    <source>
    </source>
</evidence>
<evidence type="ECO:0000303" key="4">
    <source>
    </source>
</evidence>
<evidence type="ECO:0000305" key="5"/>
<evidence type="ECO:0000305" key="6">
    <source>
    </source>
</evidence>
<name>CR108_PHYSO</name>
<sequence length="820" mass="91945">MVKLYCAVVGVAGSAFSVRVDESDTVDDLKDAIKAKKPNDFKDIDADKLELYVAKRDGVWLTEADVKSGVADITGLVRLEVVRAKLFSVGLSDEVVSEVDAQEEAAGRGPVNVLVVVPMKKRRVDAGVDEERRFFDTRDFPPLLAPPQRGATVESPEAQWEKLLNSLEWKEPKRLCASSGQNWPYQGESELAGHLVEPLALHYTAWYLQNEDKQNHAINLVLSGPGTGKSRMLDQMKGLMCAAAARSNNRKLKERMENAFVFSVTFENGTSATGSLLDRDNPEFDISYRMLYQLSKDRPNWKKFAKTLKSYRSLELDIEAAIGILAKLKGIDDVKKMTVILCVDGLQKLVNDGTKSCDFYRVLASVCSFLNSSRAFAVCVCSATIQSPVDKALSDSPQKRVFLVPPPLRGHEVLPTKTRIEKQLVDDMGGHGRALETLQLFLSHYTKDQLEEMDPTWMFEKVCDALRLQYGDIFASPFFQDPYNCREVLAAILSRRRYKLFDRIGRTDMTVDCLRSFGLFRWGAEGHLECAFILLVLLMQKLPKKLGEVDNFDDHLTRTVLVWQRFEQFVAFYRRVKSIAYCETPVALSSFHAGARFGAIQDIIITEPTSRTVVEALRQEDTKSSSDDSTCFTNRDGGVKISDMDTIVINGASASAGDLFMRVQLKVGRQNVQCNEVIQCKLLQTKQKIHEDAYAKERAKAANESSDVFLLVTPAQATEFDLPPRCGLVSANEFGRYFGPFTSRAYRSFLEPPNINTASFHELRRLEGVGDATAAKIIAERTIRRFSNLEDALNRLVPSKKGKTAMILSRMHYDDDEADL</sequence>
<protein>
    <recommendedName>
        <fullName evidence="4">Crinkler effector protein 108</fullName>
    </recommendedName>
</protein>
<gene>
    <name evidence="4" type="primary">CRN108</name>
</gene>
<feature type="signal peptide" evidence="1">
    <location>
        <begin position="1"/>
        <end position="17"/>
    </location>
</feature>
<feature type="chain" id="PRO_0000447424" description="Crinkler effector protein 108">
    <location>
        <begin position="18"/>
        <end position="820"/>
    </location>
</feature>
<feature type="region of interest" description="LQLFLAK domain" evidence="6">
    <location>
        <begin position="18"/>
        <end position="55"/>
    </location>
</feature>
<feature type="region of interest" description="DWL domain" evidence="6">
    <location>
        <begin position="58"/>
        <end position="111"/>
    </location>
</feature>
<feature type="region of interest" description="C-terminal DC effector domain" evidence="6">
    <location>
        <begin position="125"/>
        <end position="820"/>
    </location>
</feature>
<feature type="region of interest" description="HhH DNA-binding domain" evidence="6">
    <location>
        <begin position="754"/>
        <end position="791"/>
    </location>
</feature>
<feature type="short sequence motif" description="HVLVXXP motif" evidence="6">
    <location>
        <begin position="112"/>
        <end position="117"/>
    </location>
</feature>
<feature type="short sequence motif" description="Host nuclear localization signal" evidence="3">
    <location>
        <begin position="118"/>
        <end position="124"/>
    </location>
</feature>
<feature type="glycosylation site" description="N-linked (GlcNAc...) asparagine" evidence="2">
    <location>
        <position position="268"/>
    </location>
</feature>
<feature type="glycosylation site" description="N-linked (GlcNAc...) asparagine" evidence="2">
    <location>
        <position position="371"/>
    </location>
</feature>
<feature type="glycosylation site" description="N-linked (GlcNAc...) asparagine" evidence="2">
    <location>
        <position position="703"/>
    </location>
</feature>
<feature type="mutagenesis site" description="Abolishes accumulation in the host nucleus and fails to significantly promote plant susceptibility to P.capsici infection and to suppress callose deposition and ROS accumulation in N.benthamiana." evidence="3">
    <original>KKRR</original>
    <variation>AAAA</variation>
    <location>
        <begin position="120"/>
        <end position="123"/>
    </location>
</feature>
<feature type="mutagenesis site" description="Does not affect accumulation in the host nucleus but fails to significantly promote plant susceptibility to P.capsici infection and to suppress callose deposition and ROS accumulation in N.benthamiana; when associated with A-768 and A-769." evidence="3">
    <original>L</original>
    <variation>A</variation>
    <location>
        <position position="766"/>
    </location>
</feature>
<feature type="mutagenesis site" description="Does not affect accumulation in the host nucleus but fails to significantly promote plant susceptibility to P.capsici infection and to suppress callose deposition and ROS accumulation in N.benthamiana; when associated with A-768 and A-769." evidence="3">
    <original>G</original>
    <variation>A</variation>
    <location>
        <position position="768"/>
    </location>
</feature>
<feature type="mutagenesis site" description="Does not affect accumulation in the host nucleus but fails to significantly promote plant susceptibility to P.capsici infection and to suppress callose deposition and ROS accumulation in N.benthamiana; when associated with A-768 and A-769." evidence="3">
    <original>V</original>
    <variation>A</variation>
    <location>
        <position position="769"/>
    </location>
</feature>
<organism>
    <name type="scientific">Phytophthora sojae</name>
    <name type="common">Soybean stem and root rot agent</name>
    <name type="synonym">Phytophthora megasperma f. sp. glycines</name>
    <dbReference type="NCBI Taxonomy" id="67593"/>
    <lineage>
        <taxon>Eukaryota</taxon>
        <taxon>Sar</taxon>
        <taxon>Stramenopiles</taxon>
        <taxon>Oomycota</taxon>
        <taxon>Peronosporales</taxon>
        <taxon>Peronosporaceae</taxon>
        <taxon>Phytophthora</taxon>
    </lineage>
</organism>
<proteinExistence type="evidence at protein level"/>
<comment type="function">
    <text evidence="3">Secreted effector that suppresses plant basal defense and promotes plant susceptibility via targeting promoters of host HSP gene and thus inhibiting their expression. CRN108 binds directly to heat shock elements (HSEs) 5'-GAAnnTTC-3' and interferes with the association of the HSE with the plant heat shock transcription factors, which initializes HSP gene expression in response to stress.</text>
</comment>
<comment type="subcellular location">
    <subcellularLocation>
        <location evidence="3">Secreted</location>
    </subcellularLocation>
    <subcellularLocation>
        <location evidence="3">Host nucleus</location>
    </subcellularLocation>
</comment>
<comment type="induction">
    <text evidence="3">Expressed at a high level during the early stages of infection.</text>
</comment>
<comment type="domain">
    <text evidence="6">The CRN proteins have modular architectures that include a signal peptide, a conserved N-terminus, and highly diverse C-terminal domains. The conserved CRN N-terminus harbors a distinct LXLFLAK motif, which is followed by the conserved DWL domain. A highly conserved HVLVXXP motif marks the end of the CRN N-terminal domains and forms a junction where diverse C-terminal domains are fused. The conserved CRN N-terminus mediates the translocation into the plant host cells.</text>
</comment>
<comment type="domain">
    <text evidence="3">The C-terminal DC effector region contains a helix-hairpin-helix (HhH) DNA-binding domain involved in the binding to heat shock elements (HSEs), which are conserved in the promoter regions of HSP genes at promoters of targeted heat shock protein coding genes.</text>
</comment>
<comment type="similarity">
    <text evidence="5">Belongs to the Crinkler effector family.</text>
</comment>